<protein>
    <recommendedName>
        <fullName>Squamosa promoter-binding-like protein 7</fullName>
    </recommendedName>
</protein>
<name>SPL7_ORYSI</name>
<comment type="function">
    <text evidence="1">Trans-acting factor that binds specifically to the consensus nucleotide sequence 5'-TNCGTACAA-3' (By similarity). May be involved in panicle development.</text>
</comment>
<comment type="subcellular location">
    <subcellularLocation>
        <location evidence="6">Nucleus</location>
    </subcellularLocation>
</comment>
<comment type="tissue specificity">
    <text evidence="5">Expressed in young panicles.</text>
</comment>
<comment type="domain">
    <text evidence="1">The SBP-type zinc finger is required for the binding to DNA.</text>
</comment>
<accession>Q01JD1</accession>
<accession>A2XW79</accession>
<evidence type="ECO:0000250" key="1"/>
<evidence type="ECO:0000255" key="2"/>
<evidence type="ECO:0000255" key="3">
    <source>
        <dbReference type="PROSITE-ProRule" id="PRU00470"/>
    </source>
</evidence>
<evidence type="ECO:0000256" key="4">
    <source>
        <dbReference type="SAM" id="MobiDB-lite"/>
    </source>
</evidence>
<evidence type="ECO:0000269" key="5">
    <source>
    </source>
</evidence>
<evidence type="ECO:0000305" key="6"/>
<reference key="1">
    <citation type="journal article" date="2002" name="Nature">
        <title>Sequence and analysis of rice chromosome 4.</title>
        <authorList>
            <person name="Feng Q."/>
            <person name="Zhang Y."/>
            <person name="Hao P."/>
            <person name="Wang S."/>
            <person name="Fu G."/>
            <person name="Huang Y."/>
            <person name="Li Y."/>
            <person name="Zhu J."/>
            <person name="Liu Y."/>
            <person name="Hu X."/>
            <person name="Jia P."/>
            <person name="Zhang Y."/>
            <person name="Zhao Q."/>
            <person name="Ying K."/>
            <person name="Yu S."/>
            <person name="Tang Y."/>
            <person name="Weng Q."/>
            <person name="Zhang L."/>
            <person name="Lu Y."/>
            <person name="Mu J."/>
            <person name="Lu Y."/>
            <person name="Zhang L.S."/>
            <person name="Yu Z."/>
            <person name="Fan D."/>
            <person name="Liu X."/>
            <person name="Lu T."/>
            <person name="Li C."/>
            <person name="Wu Y."/>
            <person name="Sun T."/>
            <person name="Lei H."/>
            <person name="Li T."/>
            <person name="Hu H."/>
            <person name="Guan J."/>
            <person name="Wu M."/>
            <person name="Zhang R."/>
            <person name="Zhou B."/>
            <person name="Chen Z."/>
            <person name="Chen L."/>
            <person name="Jin Z."/>
            <person name="Wang R."/>
            <person name="Yin H."/>
            <person name="Cai Z."/>
            <person name="Ren S."/>
            <person name="Lv G."/>
            <person name="Gu W."/>
            <person name="Zhu G."/>
            <person name="Tu Y."/>
            <person name="Jia J."/>
            <person name="Zhang Y."/>
            <person name="Chen J."/>
            <person name="Kang H."/>
            <person name="Chen X."/>
            <person name="Shao C."/>
            <person name="Sun Y."/>
            <person name="Hu Q."/>
            <person name="Zhang X."/>
            <person name="Zhang W."/>
            <person name="Wang L."/>
            <person name="Ding C."/>
            <person name="Sheng H."/>
            <person name="Gu J."/>
            <person name="Chen S."/>
            <person name="Ni L."/>
            <person name="Zhu F."/>
            <person name="Chen W."/>
            <person name="Lan L."/>
            <person name="Lai Y."/>
            <person name="Cheng Z."/>
            <person name="Gu M."/>
            <person name="Jiang J."/>
            <person name="Li J."/>
            <person name="Hong G."/>
            <person name="Xue Y."/>
            <person name="Han B."/>
        </authorList>
    </citation>
    <scope>NUCLEOTIDE SEQUENCE [LARGE SCALE GENOMIC DNA]</scope>
    <source>
        <strain>cv. Guang-Lu-Ai No.4</strain>
    </source>
</reference>
<reference key="2">
    <citation type="journal article" date="2005" name="PLoS Biol.">
        <title>The genomes of Oryza sativa: a history of duplications.</title>
        <authorList>
            <person name="Yu J."/>
            <person name="Wang J."/>
            <person name="Lin W."/>
            <person name="Li S."/>
            <person name="Li H."/>
            <person name="Zhou J."/>
            <person name="Ni P."/>
            <person name="Dong W."/>
            <person name="Hu S."/>
            <person name="Zeng C."/>
            <person name="Zhang J."/>
            <person name="Zhang Y."/>
            <person name="Li R."/>
            <person name="Xu Z."/>
            <person name="Li S."/>
            <person name="Li X."/>
            <person name="Zheng H."/>
            <person name="Cong L."/>
            <person name="Lin L."/>
            <person name="Yin J."/>
            <person name="Geng J."/>
            <person name="Li G."/>
            <person name="Shi J."/>
            <person name="Liu J."/>
            <person name="Lv H."/>
            <person name="Li J."/>
            <person name="Wang J."/>
            <person name="Deng Y."/>
            <person name="Ran L."/>
            <person name="Shi X."/>
            <person name="Wang X."/>
            <person name="Wu Q."/>
            <person name="Li C."/>
            <person name="Ren X."/>
            <person name="Wang J."/>
            <person name="Wang X."/>
            <person name="Li D."/>
            <person name="Liu D."/>
            <person name="Zhang X."/>
            <person name="Ji Z."/>
            <person name="Zhao W."/>
            <person name="Sun Y."/>
            <person name="Zhang Z."/>
            <person name="Bao J."/>
            <person name="Han Y."/>
            <person name="Dong L."/>
            <person name="Ji J."/>
            <person name="Chen P."/>
            <person name="Wu S."/>
            <person name="Liu J."/>
            <person name="Xiao Y."/>
            <person name="Bu D."/>
            <person name="Tan J."/>
            <person name="Yang L."/>
            <person name="Ye C."/>
            <person name="Zhang J."/>
            <person name="Xu J."/>
            <person name="Zhou Y."/>
            <person name="Yu Y."/>
            <person name="Zhang B."/>
            <person name="Zhuang S."/>
            <person name="Wei H."/>
            <person name="Liu B."/>
            <person name="Lei M."/>
            <person name="Yu H."/>
            <person name="Li Y."/>
            <person name="Xu H."/>
            <person name="Wei S."/>
            <person name="He X."/>
            <person name="Fang L."/>
            <person name="Zhang Z."/>
            <person name="Zhang Y."/>
            <person name="Huang X."/>
            <person name="Su Z."/>
            <person name="Tong W."/>
            <person name="Li J."/>
            <person name="Tong Z."/>
            <person name="Li S."/>
            <person name="Ye J."/>
            <person name="Wang L."/>
            <person name="Fang L."/>
            <person name="Lei T."/>
            <person name="Chen C.-S."/>
            <person name="Chen H.-C."/>
            <person name="Xu Z."/>
            <person name="Li H."/>
            <person name="Huang H."/>
            <person name="Zhang F."/>
            <person name="Xu H."/>
            <person name="Li N."/>
            <person name="Zhao C."/>
            <person name="Li S."/>
            <person name="Dong L."/>
            <person name="Huang Y."/>
            <person name="Li L."/>
            <person name="Xi Y."/>
            <person name="Qi Q."/>
            <person name="Li W."/>
            <person name="Zhang B."/>
            <person name="Hu W."/>
            <person name="Zhang Y."/>
            <person name="Tian X."/>
            <person name="Jiao Y."/>
            <person name="Liang X."/>
            <person name="Jin J."/>
            <person name="Gao L."/>
            <person name="Zheng W."/>
            <person name="Hao B."/>
            <person name="Liu S.-M."/>
            <person name="Wang W."/>
            <person name="Yuan L."/>
            <person name="Cao M."/>
            <person name="McDermott J."/>
            <person name="Samudrala R."/>
            <person name="Wang J."/>
            <person name="Wong G.K.-S."/>
            <person name="Yang H."/>
        </authorList>
    </citation>
    <scope>NUCLEOTIDE SEQUENCE [LARGE SCALE GENOMIC DNA]</scope>
    <source>
        <strain>cv. 93-11</strain>
    </source>
</reference>
<reference key="3">
    <citation type="journal article" date="2006" name="Plant Physiol.">
        <title>Genomic organization, differential expression, and interaction of SQUAMOSA promoter-binding-like transcription factors and microRNA156 in rice.</title>
        <authorList>
            <person name="Xie K."/>
            <person name="Wu C."/>
            <person name="Xiong L."/>
        </authorList>
    </citation>
    <scope>TISSUE SPECIFICITY</scope>
    <scope>GENE FAMILY</scope>
    <scope>NOMENCLATURE</scope>
</reference>
<reference key="4">
    <citation type="journal article" date="2008" name="Gene">
        <title>Comparative study of SBP-box gene family in Arabidopsis and rice.</title>
        <authorList>
            <person name="Yang Z."/>
            <person name="Wang X."/>
            <person name="Gu S."/>
            <person name="Hu Z."/>
            <person name="Xu H."/>
            <person name="Xu C."/>
        </authorList>
    </citation>
    <scope>GENE FAMILY</scope>
</reference>
<keyword id="KW-0238">DNA-binding</keyword>
<keyword id="KW-0479">Metal-binding</keyword>
<keyword id="KW-0539">Nucleus</keyword>
<keyword id="KW-1185">Reference proteome</keyword>
<keyword id="KW-0804">Transcription</keyword>
<keyword id="KW-0805">Transcription regulation</keyword>
<keyword id="KW-0862">Zinc</keyword>
<keyword id="KW-0863">Zinc-finger</keyword>
<sequence length="360" mass="37384">MEGNGCGGSGATPRGVVGMHWAPVVTSPPSPQPPFLPPAPCRPDVQMQQQGGLTCLKLGKRPCFWGGDGAGQVAQGSGGGGGGGGGGSADQGKRKEKAATAVPVVPRCQVEGCDITLQGVKEYHRRHKVCEVHAKAPRVVVHGTEQRFCQQCSRFHVLAEFDDAKKSCRRRLAGHNERRRRSNASEAMARGSAHPHGMPVLGHGFPPYGLPTSSAGALSLLSSARATGPWLMPTPDISARSSAALDELIAENRAALLSWQFFSDRQPPPAGRPTGRSPGSETAGGWHAHLQARPPPPGAGGQHEHQSGHVTLDLMQATTAAGGSGAPFRPVPARPAKEGGDAGCTSDAWTPSPMEGARVV</sequence>
<dbReference type="EMBL" id="CR855175">
    <property type="protein sequence ID" value="CAH67152.1"/>
    <property type="molecule type" value="Genomic_DNA"/>
</dbReference>
<dbReference type="EMBL" id="CM000129">
    <property type="protein sequence ID" value="EAY95089.1"/>
    <property type="molecule type" value="Genomic_DNA"/>
</dbReference>
<dbReference type="SMR" id="Q01JD1"/>
<dbReference type="STRING" id="39946.Q01JD1"/>
<dbReference type="EnsemblPlants" id="OsKYG_04g0021750.01">
    <property type="protein sequence ID" value="OsKYG_04g0021750.01"/>
    <property type="gene ID" value="OsKYG_04g0021750"/>
</dbReference>
<dbReference type="EnsemblPlants" id="OsLima_04g0021920.01">
    <property type="protein sequence ID" value="OsLima_04g0021920.01"/>
    <property type="gene ID" value="OsLima_04g0021920"/>
</dbReference>
<dbReference type="EnsemblPlants" id="OsLiXu_04g0022260.01">
    <property type="protein sequence ID" value="OsLiXu_04g0022260.01"/>
    <property type="gene ID" value="OsLiXu_04g0022260"/>
</dbReference>
<dbReference type="EnsemblPlants" id="OsMH63_04G022790_01">
    <property type="protein sequence ID" value="OsMH63_04G022790_01"/>
    <property type="gene ID" value="OsMH63_04G022790"/>
</dbReference>
<dbReference type="EnsemblPlants" id="OsZS97_04G022800_01">
    <property type="protein sequence ID" value="OsZS97_04G022800_01"/>
    <property type="gene ID" value="OsZS97_04G022800"/>
</dbReference>
<dbReference type="Gramene" id="OsKYG_04g0021750.01">
    <property type="protein sequence ID" value="OsKYG_04g0021750.01"/>
    <property type="gene ID" value="OsKYG_04g0021750"/>
</dbReference>
<dbReference type="Gramene" id="OsLima_04g0021920.01">
    <property type="protein sequence ID" value="OsLima_04g0021920.01"/>
    <property type="gene ID" value="OsLima_04g0021920"/>
</dbReference>
<dbReference type="Gramene" id="OsLiXu_04g0022260.01">
    <property type="protein sequence ID" value="OsLiXu_04g0022260.01"/>
    <property type="gene ID" value="OsLiXu_04g0022260"/>
</dbReference>
<dbReference type="Gramene" id="OsMH63_04G022790_01">
    <property type="protein sequence ID" value="OsMH63_04G022790_01"/>
    <property type="gene ID" value="OsMH63_04G022790"/>
</dbReference>
<dbReference type="Gramene" id="OsZS97_04G022800_01">
    <property type="protein sequence ID" value="OsZS97_04G022800_01"/>
    <property type="gene ID" value="OsZS97_04G022800"/>
</dbReference>
<dbReference type="HOGENOM" id="CLU_065896_1_0_1"/>
<dbReference type="Proteomes" id="UP000007015">
    <property type="component" value="Chromosome 4"/>
</dbReference>
<dbReference type="GO" id="GO:0005634">
    <property type="term" value="C:nucleus"/>
    <property type="evidence" value="ECO:0007669"/>
    <property type="project" value="UniProtKB-SubCell"/>
</dbReference>
<dbReference type="GO" id="GO:0003677">
    <property type="term" value="F:DNA binding"/>
    <property type="evidence" value="ECO:0007669"/>
    <property type="project" value="UniProtKB-KW"/>
</dbReference>
<dbReference type="GO" id="GO:0008270">
    <property type="term" value="F:zinc ion binding"/>
    <property type="evidence" value="ECO:0007669"/>
    <property type="project" value="UniProtKB-KW"/>
</dbReference>
<dbReference type="FunFam" id="4.10.1100.10:FF:000001">
    <property type="entry name" value="Squamosa promoter-binding-like protein 14"/>
    <property type="match status" value="1"/>
</dbReference>
<dbReference type="Gene3D" id="4.10.1100.10">
    <property type="entry name" value="Transcription factor, SBP-box domain"/>
    <property type="match status" value="1"/>
</dbReference>
<dbReference type="InterPro" id="IPR044817">
    <property type="entry name" value="SBP-like"/>
</dbReference>
<dbReference type="InterPro" id="IPR004333">
    <property type="entry name" value="SBP_dom"/>
</dbReference>
<dbReference type="InterPro" id="IPR036893">
    <property type="entry name" value="SBP_sf"/>
</dbReference>
<dbReference type="PANTHER" id="PTHR31251">
    <property type="entry name" value="SQUAMOSA PROMOTER-BINDING-LIKE PROTEIN 4"/>
    <property type="match status" value="1"/>
</dbReference>
<dbReference type="PANTHER" id="PTHR31251:SF222">
    <property type="entry name" value="SQUAMOSA PROMOTER-BINDING-LIKE PROTEIN 7"/>
    <property type="match status" value="1"/>
</dbReference>
<dbReference type="Pfam" id="PF03110">
    <property type="entry name" value="SBP"/>
    <property type="match status" value="1"/>
</dbReference>
<dbReference type="SUPFAM" id="SSF103612">
    <property type="entry name" value="SBT domain"/>
    <property type="match status" value="1"/>
</dbReference>
<dbReference type="PROSITE" id="PS51141">
    <property type="entry name" value="ZF_SBP"/>
    <property type="match status" value="1"/>
</dbReference>
<feature type="chain" id="PRO_0000308231" description="Squamosa promoter-binding-like protein 7">
    <location>
        <begin position="1"/>
        <end position="360"/>
    </location>
</feature>
<feature type="zinc finger region" description="SBP-type" evidence="3">
    <location>
        <begin position="105"/>
        <end position="182"/>
    </location>
</feature>
<feature type="region of interest" description="Disordered" evidence="4">
    <location>
        <begin position="74"/>
        <end position="98"/>
    </location>
</feature>
<feature type="region of interest" description="Disordered" evidence="4">
    <location>
        <begin position="172"/>
        <end position="196"/>
    </location>
</feature>
<feature type="region of interest" description="Disordered" evidence="4">
    <location>
        <begin position="261"/>
        <end position="306"/>
    </location>
</feature>
<feature type="region of interest" description="Disordered" evidence="4">
    <location>
        <begin position="320"/>
        <end position="360"/>
    </location>
</feature>
<feature type="short sequence motif" description="Bipartite nuclear localization signal" evidence="2">
    <location>
        <begin position="165"/>
        <end position="181"/>
    </location>
</feature>
<feature type="compositionally biased region" description="Gly residues" evidence="4">
    <location>
        <begin position="74"/>
        <end position="89"/>
    </location>
</feature>
<feature type="compositionally biased region" description="Basic residues" evidence="4">
    <location>
        <begin position="172"/>
        <end position="182"/>
    </location>
</feature>
<feature type="binding site" evidence="3">
    <location>
        <position position="108"/>
    </location>
    <ligand>
        <name>Zn(2+)</name>
        <dbReference type="ChEBI" id="CHEBI:29105"/>
        <label>1</label>
    </ligand>
</feature>
<feature type="binding site" evidence="3">
    <location>
        <position position="113"/>
    </location>
    <ligand>
        <name>Zn(2+)</name>
        <dbReference type="ChEBI" id="CHEBI:29105"/>
        <label>1</label>
    </ligand>
</feature>
<feature type="binding site" evidence="3">
    <location>
        <position position="130"/>
    </location>
    <ligand>
        <name>Zn(2+)</name>
        <dbReference type="ChEBI" id="CHEBI:29105"/>
        <label>1</label>
    </ligand>
</feature>
<feature type="binding site" evidence="3">
    <location>
        <position position="133"/>
    </location>
    <ligand>
        <name>Zn(2+)</name>
        <dbReference type="ChEBI" id="CHEBI:29105"/>
        <label>1</label>
    </ligand>
</feature>
<feature type="binding site" evidence="3">
    <location>
        <position position="149"/>
    </location>
    <ligand>
        <name>Zn(2+)</name>
        <dbReference type="ChEBI" id="CHEBI:29105"/>
        <label>2</label>
    </ligand>
</feature>
<feature type="binding site" evidence="3">
    <location>
        <position position="152"/>
    </location>
    <ligand>
        <name>Zn(2+)</name>
        <dbReference type="ChEBI" id="CHEBI:29105"/>
        <label>2</label>
    </ligand>
</feature>
<feature type="binding site" evidence="3">
    <location>
        <position position="156"/>
    </location>
    <ligand>
        <name>Zn(2+)</name>
        <dbReference type="ChEBI" id="CHEBI:29105"/>
        <label>2</label>
    </ligand>
</feature>
<feature type="binding site" evidence="3">
    <location>
        <position position="168"/>
    </location>
    <ligand>
        <name>Zn(2+)</name>
        <dbReference type="ChEBI" id="CHEBI:29105"/>
        <label>2</label>
    </ligand>
</feature>
<feature type="sequence conflict" description="In Ref. 2; EAY95089." evidence="6" ref="2">
    <original>F</original>
    <variation>L</variation>
    <location>
        <position position="155"/>
    </location>
</feature>
<feature type="sequence conflict" description="In Ref. 2; EAY95089." evidence="6" ref="2">
    <original>R</original>
    <variation>P</variation>
    <location>
        <position position="293"/>
    </location>
</feature>
<proteinExistence type="evidence at transcript level"/>
<organism>
    <name type="scientific">Oryza sativa subsp. indica</name>
    <name type="common">Rice</name>
    <dbReference type="NCBI Taxonomy" id="39946"/>
    <lineage>
        <taxon>Eukaryota</taxon>
        <taxon>Viridiplantae</taxon>
        <taxon>Streptophyta</taxon>
        <taxon>Embryophyta</taxon>
        <taxon>Tracheophyta</taxon>
        <taxon>Spermatophyta</taxon>
        <taxon>Magnoliopsida</taxon>
        <taxon>Liliopsida</taxon>
        <taxon>Poales</taxon>
        <taxon>Poaceae</taxon>
        <taxon>BOP clade</taxon>
        <taxon>Oryzoideae</taxon>
        <taxon>Oryzeae</taxon>
        <taxon>Oryzinae</taxon>
        <taxon>Oryza</taxon>
        <taxon>Oryza sativa</taxon>
    </lineage>
</organism>
<gene>
    <name type="primary">SPL7</name>
    <name type="ORF">OsI_016322</name>
    <name type="ORF">OSIGBa0122F23.9</name>
</gene>